<keyword id="KW-0028">Amino-acid biosynthesis</keyword>
<keyword id="KW-0055">Arginine biosynthesis</keyword>
<keyword id="KW-0067">ATP-binding</keyword>
<keyword id="KW-0315">Glutamine amidotransferase</keyword>
<keyword id="KW-0436">Ligase</keyword>
<keyword id="KW-0547">Nucleotide-binding</keyword>
<keyword id="KW-0665">Pyrimidine biosynthesis</keyword>
<keyword id="KW-1185">Reference proteome</keyword>
<reference key="1">
    <citation type="journal article" date="2005" name="Science">
        <title>Life at depth: Photobacterium profundum genome sequence and expression analysis.</title>
        <authorList>
            <person name="Vezzi A."/>
            <person name="Campanaro S."/>
            <person name="D'Angelo M."/>
            <person name="Simonato F."/>
            <person name="Vitulo N."/>
            <person name="Lauro F.M."/>
            <person name="Cestaro A."/>
            <person name="Malacrida G."/>
            <person name="Simionati B."/>
            <person name="Cannata N."/>
            <person name="Romualdi C."/>
            <person name="Bartlett D.H."/>
            <person name="Valle G."/>
        </authorList>
    </citation>
    <scope>NUCLEOTIDE SEQUENCE [LARGE SCALE GENOMIC DNA]</scope>
    <source>
        <strain>ATCC BAA-1253 / SS9</strain>
    </source>
</reference>
<dbReference type="EC" id="6.3.5.5" evidence="1"/>
<dbReference type="EMBL" id="CR378664">
    <property type="protein sequence ID" value="CAG19019.1"/>
    <property type="molecule type" value="Genomic_DNA"/>
</dbReference>
<dbReference type="RefSeq" id="WP_011217369.1">
    <property type="nucleotide sequence ID" value="NC_006370.1"/>
</dbReference>
<dbReference type="SMR" id="Q6LUK6"/>
<dbReference type="STRING" id="298386.PBPRA0596"/>
<dbReference type="MEROPS" id="C26.954"/>
<dbReference type="KEGG" id="ppr:PBPRA0596"/>
<dbReference type="eggNOG" id="COG0505">
    <property type="taxonomic scope" value="Bacteria"/>
</dbReference>
<dbReference type="HOGENOM" id="CLU_035901_2_1_6"/>
<dbReference type="UniPathway" id="UPA00068">
    <property type="reaction ID" value="UER00171"/>
</dbReference>
<dbReference type="UniPathway" id="UPA00070">
    <property type="reaction ID" value="UER00115"/>
</dbReference>
<dbReference type="Proteomes" id="UP000000593">
    <property type="component" value="Chromosome 1"/>
</dbReference>
<dbReference type="GO" id="GO:0005524">
    <property type="term" value="F:ATP binding"/>
    <property type="evidence" value="ECO:0007669"/>
    <property type="project" value="UniProtKB-UniRule"/>
</dbReference>
<dbReference type="GO" id="GO:0004088">
    <property type="term" value="F:carbamoyl-phosphate synthase (glutamine-hydrolyzing) activity"/>
    <property type="evidence" value="ECO:0007669"/>
    <property type="project" value="UniProtKB-UniRule"/>
</dbReference>
<dbReference type="GO" id="GO:0004359">
    <property type="term" value="F:glutaminase activity"/>
    <property type="evidence" value="ECO:0007669"/>
    <property type="project" value="RHEA"/>
</dbReference>
<dbReference type="GO" id="GO:0006207">
    <property type="term" value="P:'de novo' pyrimidine nucleobase biosynthetic process"/>
    <property type="evidence" value="ECO:0007669"/>
    <property type="project" value="InterPro"/>
</dbReference>
<dbReference type="GO" id="GO:0044205">
    <property type="term" value="P:'de novo' UMP biosynthetic process"/>
    <property type="evidence" value="ECO:0007669"/>
    <property type="project" value="UniProtKB-UniRule"/>
</dbReference>
<dbReference type="GO" id="GO:0006541">
    <property type="term" value="P:glutamine metabolic process"/>
    <property type="evidence" value="ECO:0007669"/>
    <property type="project" value="InterPro"/>
</dbReference>
<dbReference type="GO" id="GO:0006526">
    <property type="term" value="P:L-arginine biosynthetic process"/>
    <property type="evidence" value="ECO:0007669"/>
    <property type="project" value="UniProtKB-UniRule"/>
</dbReference>
<dbReference type="CDD" id="cd01744">
    <property type="entry name" value="GATase1_CPSase"/>
    <property type="match status" value="1"/>
</dbReference>
<dbReference type="FunFam" id="3.40.50.880:FF:000011">
    <property type="entry name" value="Carbamoyl-phosphate synthase small chain"/>
    <property type="match status" value="1"/>
</dbReference>
<dbReference type="FunFam" id="3.50.30.20:FF:000001">
    <property type="entry name" value="Carbamoyl-phosphate synthase small chain"/>
    <property type="match status" value="1"/>
</dbReference>
<dbReference type="Gene3D" id="3.40.50.880">
    <property type="match status" value="1"/>
</dbReference>
<dbReference type="Gene3D" id="3.50.30.20">
    <property type="entry name" value="Carbamoyl-phosphate synthase small subunit, N-terminal domain"/>
    <property type="match status" value="1"/>
</dbReference>
<dbReference type="HAMAP" id="MF_01209">
    <property type="entry name" value="CPSase_S_chain"/>
    <property type="match status" value="1"/>
</dbReference>
<dbReference type="InterPro" id="IPR050472">
    <property type="entry name" value="Anth_synth/Amidotransfase"/>
</dbReference>
<dbReference type="InterPro" id="IPR006274">
    <property type="entry name" value="CarbamoylP_synth_ssu"/>
</dbReference>
<dbReference type="InterPro" id="IPR002474">
    <property type="entry name" value="CarbamoylP_synth_ssu_N"/>
</dbReference>
<dbReference type="InterPro" id="IPR036480">
    <property type="entry name" value="CarbP_synth_ssu_N_sf"/>
</dbReference>
<dbReference type="InterPro" id="IPR029062">
    <property type="entry name" value="Class_I_gatase-like"/>
</dbReference>
<dbReference type="InterPro" id="IPR035686">
    <property type="entry name" value="CPSase_GATase1"/>
</dbReference>
<dbReference type="InterPro" id="IPR017926">
    <property type="entry name" value="GATASE"/>
</dbReference>
<dbReference type="NCBIfam" id="TIGR01368">
    <property type="entry name" value="CPSaseIIsmall"/>
    <property type="match status" value="1"/>
</dbReference>
<dbReference type="NCBIfam" id="NF009475">
    <property type="entry name" value="PRK12838.1"/>
    <property type="match status" value="1"/>
</dbReference>
<dbReference type="PANTHER" id="PTHR43418:SF7">
    <property type="entry name" value="CARBAMOYL-PHOSPHATE SYNTHASE SMALL CHAIN"/>
    <property type="match status" value="1"/>
</dbReference>
<dbReference type="PANTHER" id="PTHR43418">
    <property type="entry name" value="MULTIFUNCTIONAL TRYPTOPHAN BIOSYNTHESIS PROTEIN-RELATED"/>
    <property type="match status" value="1"/>
</dbReference>
<dbReference type="Pfam" id="PF00988">
    <property type="entry name" value="CPSase_sm_chain"/>
    <property type="match status" value="1"/>
</dbReference>
<dbReference type="Pfam" id="PF00117">
    <property type="entry name" value="GATase"/>
    <property type="match status" value="1"/>
</dbReference>
<dbReference type="PRINTS" id="PR00099">
    <property type="entry name" value="CPSGATASE"/>
</dbReference>
<dbReference type="PRINTS" id="PR00096">
    <property type="entry name" value="GATASE"/>
</dbReference>
<dbReference type="SMART" id="SM01097">
    <property type="entry name" value="CPSase_sm_chain"/>
    <property type="match status" value="1"/>
</dbReference>
<dbReference type="SUPFAM" id="SSF52021">
    <property type="entry name" value="Carbamoyl phosphate synthetase, small subunit N-terminal domain"/>
    <property type="match status" value="1"/>
</dbReference>
<dbReference type="SUPFAM" id="SSF52317">
    <property type="entry name" value="Class I glutamine amidotransferase-like"/>
    <property type="match status" value="1"/>
</dbReference>
<dbReference type="PROSITE" id="PS51273">
    <property type="entry name" value="GATASE_TYPE_1"/>
    <property type="match status" value="1"/>
</dbReference>
<gene>
    <name evidence="1" type="primary">carA</name>
    <name type="ordered locus">PBPRA0596</name>
</gene>
<feature type="chain" id="PRO_0000112303" description="Carbamoyl phosphate synthase small chain">
    <location>
        <begin position="1"/>
        <end position="384"/>
    </location>
</feature>
<feature type="domain" description="Glutamine amidotransferase type-1" evidence="1">
    <location>
        <begin position="193"/>
        <end position="380"/>
    </location>
</feature>
<feature type="region of interest" description="CPSase" evidence="1">
    <location>
        <begin position="1"/>
        <end position="189"/>
    </location>
</feature>
<feature type="active site" description="Nucleophile" evidence="1">
    <location>
        <position position="269"/>
    </location>
</feature>
<feature type="active site" evidence="1">
    <location>
        <position position="353"/>
    </location>
</feature>
<feature type="active site" evidence="1">
    <location>
        <position position="355"/>
    </location>
</feature>
<feature type="binding site" evidence="1">
    <location>
        <position position="47"/>
    </location>
    <ligand>
        <name>L-glutamine</name>
        <dbReference type="ChEBI" id="CHEBI:58359"/>
    </ligand>
</feature>
<feature type="binding site" evidence="1">
    <location>
        <position position="241"/>
    </location>
    <ligand>
        <name>L-glutamine</name>
        <dbReference type="ChEBI" id="CHEBI:58359"/>
    </ligand>
</feature>
<feature type="binding site" evidence="1">
    <location>
        <position position="243"/>
    </location>
    <ligand>
        <name>L-glutamine</name>
        <dbReference type="ChEBI" id="CHEBI:58359"/>
    </ligand>
</feature>
<feature type="binding site" evidence="1">
    <location>
        <position position="270"/>
    </location>
    <ligand>
        <name>L-glutamine</name>
        <dbReference type="ChEBI" id="CHEBI:58359"/>
    </ligand>
</feature>
<feature type="binding site" evidence="1">
    <location>
        <position position="273"/>
    </location>
    <ligand>
        <name>L-glutamine</name>
        <dbReference type="ChEBI" id="CHEBI:58359"/>
    </ligand>
</feature>
<feature type="binding site" evidence="1">
    <location>
        <position position="311"/>
    </location>
    <ligand>
        <name>L-glutamine</name>
        <dbReference type="ChEBI" id="CHEBI:58359"/>
    </ligand>
</feature>
<feature type="binding site" evidence="1">
    <location>
        <position position="313"/>
    </location>
    <ligand>
        <name>L-glutamine</name>
        <dbReference type="ChEBI" id="CHEBI:58359"/>
    </ligand>
</feature>
<feature type="binding site" evidence="1">
    <location>
        <position position="314"/>
    </location>
    <ligand>
        <name>L-glutamine</name>
        <dbReference type="ChEBI" id="CHEBI:58359"/>
    </ligand>
</feature>
<comment type="function">
    <text evidence="1">Small subunit of the glutamine-dependent carbamoyl phosphate synthetase (CPSase). CPSase catalyzes the formation of carbamoyl phosphate from the ammonia moiety of glutamine, carbonate, and phosphate donated by ATP, constituting the first step of 2 biosynthetic pathways, one leading to arginine and/or urea and the other to pyrimidine nucleotides. The small subunit (glutamine amidotransferase) binds and cleaves glutamine to supply the large subunit with the substrate ammonia.</text>
</comment>
<comment type="catalytic activity">
    <reaction evidence="1">
        <text>hydrogencarbonate + L-glutamine + 2 ATP + H2O = carbamoyl phosphate + L-glutamate + 2 ADP + phosphate + 2 H(+)</text>
        <dbReference type="Rhea" id="RHEA:18633"/>
        <dbReference type="ChEBI" id="CHEBI:15377"/>
        <dbReference type="ChEBI" id="CHEBI:15378"/>
        <dbReference type="ChEBI" id="CHEBI:17544"/>
        <dbReference type="ChEBI" id="CHEBI:29985"/>
        <dbReference type="ChEBI" id="CHEBI:30616"/>
        <dbReference type="ChEBI" id="CHEBI:43474"/>
        <dbReference type="ChEBI" id="CHEBI:58228"/>
        <dbReference type="ChEBI" id="CHEBI:58359"/>
        <dbReference type="ChEBI" id="CHEBI:456216"/>
        <dbReference type="EC" id="6.3.5.5"/>
    </reaction>
</comment>
<comment type="catalytic activity">
    <molecule>Carbamoyl phosphate synthase small chain</molecule>
    <reaction evidence="1">
        <text>L-glutamine + H2O = L-glutamate + NH4(+)</text>
        <dbReference type="Rhea" id="RHEA:15889"/>
        <dbReference type="ChEBI" id="CHEBI:15377"/>
        <dbReference type="ChEBI" id="CHEBI:28938"/>
        <dbReference type="ChEBI" id="CHEBI:29985"/>
        <dbReference type="ChEBI" id="CHEBI:58359"/>
    </reaction>
</comment>
<comment type="pathway">
    <text evidence="1">Amino-acid biosynthesis; L-arginine biosynthesis; carbamoyl phosphate from bicarbonate: step 1/1.</text>
</comment>
<comment type="pathway">
    <text evidence="1">Pyrimidine metabolism; UMP biosynthesis via de novo pathway; (S)-dihydroorotate from bicarbonate: step 1/3.</text>
</comment>
<comment type="subunit">
    <text evidence="1">Composed of two chains; the small (or glutamine) chain promotes the hydrolysis of glutamine to ammonia, which is used by the large (or ammonia) chain to synthesize carbamoyl phosphate. Tetramer of heterodimers (alpha,beta)4.</text>
</comment>
<comment type="similarity">
    <text evidence="1">Belongs to the CarA family.</text>
</comment>
<name>CARA_PHOPR</name>
<sequence>MSKSALLVLEDGTVFRGISIGADGSAIGEVVFNTSMTGYQEILTDPSYSQQIVTLTYPHIGNTGTNSEDEESNSIHAQGLVIRDLPLLASNFRNERSLSDYLKSQNIVGIAEIDTRKLTRILREKGAQNGCIMAGDNLDEALALDKAKEFPGLKGMDLAKVVTTAETYQWKQGSWTLLDGLPEAKDDSELPYHVVAYDFGAKRNILRMLVDRGCRLTVVPAQTSAEDVLAMNPDGVFLSNGPGDPEPCTYAIEATKTFLDIGLPIFGICLGHQILALASGAKTVKMKFGHHGANHPVKDIDRDVVMITSQNHGFAADEATLPDTLRATHKSLFDGSLQGIHRTDKPAFSFQGHPEASPGPTDAAPLFDHFIELIKLSVNEARSA</sequence>
<organism>
    <name type="scientific">Photobacterium profundum (strain SS9)</name>
    <dbReference type="NCBI Taxonomy" id="298386"/>
    <lineage>
        <taxon>Bacteria</taxon>
        <taxon>Pseudomonadati</taxon>
        <taxon>Pseudomonadota</taxon>
        <taxon>Gammaproteobacteria</taxon>
        <taxon>Vibrionales</taxon>
        <taxon>Vibrionaceae</taxon>
        <taxon>Photobacterium</taxon>
    </lineage>
</organism>
<proteinExistence type="inferred from homology"/>
<protein>
    <recommendedName>
        <fullName evidence="1">Carbamoyl phosphate synthase small chain</fullName>
        <ecNumber evidence="1">6.3.5.5</ecNumber>
    </recommendedName>
    <alternativeName>
        <fullName evidence="1">Carbamoyl phosphate synthetase glutamine chain</fullName>
    </alternativeName>
</protein>
<evidence type="ECO:0000255" key="1">
    <source>
        <dbReference type="HAMAP-Rule" id="MF_01209"/>
    </source>
</evidence>
<accession>Q6LUK6</accession>